<reference key="1">
    <citation type="journal article" date="2005" name="J. Bacteriol.">
        <title>Whole-genome sequencing of Staphylococcus haemolyticus uncovers the extreme plasticity of its genome and the evolution of human-colonizing staphylococcal species.</title>
        <authorList>
            <person name="Takeuchi F."/>
            <person name="Watanabe S."/>
            <person name="Baba T."/>
            <person name="Yuzawa H."/>
            <person name="Ito T."/>
            <person name="Morimoto Y."/>
            <person name="Kuroda M."/>
            <person name="Cui L."/>
            <person name="Takahashi M."/>
            <person name="Ankai A."/>
            <person name="Baba S."/>
            <person name="Fukui S."/>
            <person name="Lee J.C."/>
            <person name="Hiramatsu K."/>
        </authorList>
    </citation>
    <scope>NUCLEOTIDE SEQUENCE [LARGE SCALE GENOMIC DNA]</scope>
    <source>
        <strain>JCSC1435</strain>
    </source>
</reference>
<comment type="function">
    <text evidence="1">Mnh complex is a Na(+)/H(+) antiporter involved in Na(+) excretion.</text>
</comment>
<comment type="subunit">
    <text evidence="1">May form a heterooligomeric complex that consists of seven subunits: mnhA1, mnhB1, mnhC1, mnhD1, mnhE1, mnhF1 and mnhG1.</text>
</comment>
<comment type="subcellular location">
    <subcellularLocation>
        <location evidence="3">Cell membrane</location>
        <topology evidence="3">Multi-pass membrane protein</topology>
    </subcellularLocation>
</comment>
<comment type="similarity">
    <text evidence="3">Belongs to the CPA3 antiporters (TC 2.A.63) subunit E family.</text>
</comment>
<protein>
    <recommendedName>
        <fullName>Na(+)/H(+) antiporter subunit E1</fullName>
    </recommendedName>
    <alternativeName>
        <fullName>Mnh complex subunit E1</fullName>
    </alternativeName>
</protein>
<gene>
    <name type="primary">mnhE1</name>
    <name type="ordered locus">SH2003</name>
</gene>
<accession>Q4L4W3</accession>
<dbReference type="EMBL" id="AP006716">
    <property type="protein sequence ID" value="BAE05312.1"/>
    <property type="molecule type" value="Genomic_DNA"/>
</dbReference>
<dbReference type="RefSeq" id="WP_011276270.1">
    <property type="nucleotide sequence ID" value="NC_007168.1"/>
</dbReference>
<dbReference type="SMR" id="Q4L4W3"/>
<dbReference type="KEGG" id="sha:SH2003"/>
<dbReference type="eggNOG" id="COG1863">
    <property type="taxonomic scope" value="Bacteria"/>
</dbReference>
<dbReference type="HOGENOM" id="CLU_086615_3_2_9"/>
<dbReference type="OrthoDB" id="9800498at2"/>
<dbReference type="Proteomes" id="UP000000543">
    <property type="component" value="Chromosome"/>
</dbReference>
<dbReference type="GO" id="GO:0005886">
    <property type="term" value="C:plasma membrane"/>
    <property type="evidence" value="ECO:0007669"/>
    <property type="project" value="UniProtKB-SubCell"/>
</dbReference>
<dbReference type="GO" id="GO:0015297">
    <property type="term" value="F:antiporter activity"/>
    <property type="evidence" value="ECO:0007669"/>
    <property type="project" value="UniProtKB-KW"/>
</dbReference>
<dbReference type="GO" id="GO:0008324">
    <property type="term" value="F:monoatomic cation transmembrane transporter activity"/>
    <property type="evidence" value="ECO:0007669"/>
    <property type="project" value="InterPro"/>
</dbReference>
<dbReference type="GO" id="GO:1902600">
    <property type="term" value="P:proton transmembrane transport"/>
    <property type="evidence" value="ECO:0007669"/>
    <property type="project" value="UniProtKB-KW"/>
</dbReference>
<dbReference type="GO" id="GO:0006814">
    <property type="term" value="P:sodium ion transport"/>
    <property type="evidence" value="ECO:0007669"/>
    <property type="project" value="UniProtKB-KW"/>
</dbReference>
<dbReference type="InterPro" id="IPR002758">
    <property type="entry name" value="Cation_antiport_E"/>
</dbReference>
<dbReference type="NCBIfam" id="NF009291">
    <property type="entry name" value="PRK12651.1-1"/>
    <property type="match status" value="1"/>
</dbReference>
<dbReference type="PANTHER" id="PTHR34584">
    <property type="entry name" value="NA(+)/H(+) ANTIPORTER SUBUNIT E1"/>
    <property type="match status" value="1"/>
</dbReference>
<dbReference type="PANTHER" id="PTHR34584:SF1">
    <property type="entry name" value="NA(+)_H(+) ANTIPORTER SUBUNIT E1"/>
    <property type="match status" value="1"/>
</dbReference>
<dbReference type="Pfam" id="PF01899">
    <property type="entry name" value="MNHE"/>
    <property type="match status" value="1"/>
</dbReference>
<dbReference type="PIRSF" id="PIRSF019239">
    <property type="entry name" value="MrpE"/>
    <property type="match status" value="1"/>
</dbReference>
<proteinExistence type="inferred from homology"/>
<name>MNHE1_STAHJ</name>
<keyword id="KW-0050">Antiport</keyword>
<keyword id="KW-1003">Cell membrane</keyword>
<keyword id="KW-0375">Hydrogen ion transport</keyword>
<keyword id="KW-0406">Ion transport</keyword>
<keyword id="KW-0472">Membrane</keyword>
<keyword id="KW-0915">Sodium</keyword>
<keyword id="KW-0739">Sodium transport</keyword>
<keyword id="KW-0812">Transmembrane</keyword>
<keyword id="KW-1133">Transmembrane helix</keyword>
<keyword id="KW-0813">Transport</keyword>
<feature type="chain" id="PRO_0000372151" description="Na(+)/H(+) antiporter subunit E1">
    <location>
        <begin position="1"/>
        <end position="159"/>
    </location>
</feature>
<feature type="transmembrane region" description="Helical" evidence="2">
    <location>
        <begin position="1"/>
        <end position="21"/>
    </location>
</feature>
<feature type="transmembrane region" description="Helical" evidence="2">
    <location>
        <begin position="27"/>
        <end position="47"/>
    </location>
</feature>
<feature type="transmembrane region" description="Helical" evidence="2">
    <location>
        <begin position="49"/>
        <end position="69"/>
    </location>
</feature>
<feature type="transmembrane region" description="Helical" evidence="2">
    <location>
        <begin position="101"/>
        <end position="121"/>
    </location>
</feature>
<evidence type="ECO:0000250" key="1"/>
<evidence type="ECO:0000255" key="2"/>
<evidence type="ECO:0000305" key="3"/>
<sequence length="159" mass="18231">MAIQIILNFILAFIWIFLSGSYTLNNLLLGFILGLGFVYLFSRILPGRFYFIKIYKILKLAVVFFVELLKANIDVLKIVLQPKLKNEPGFFVYHTDLKTDWQIVLLSNLITLTPGTVVLGISDDRKKIYIHSIDFSTKEEEVEGIKSSLEKVVREVGED</sequence>
<organism>
    <name type="scientific">Staphylococcus haemolyticus (strain JCSC1435)</name>
    <dbReference type="NCBI Taxonomy" id="279808"/>
    <lineage>
        <taxon>Bacteria</taxon>
        <taxon>Bacillati</taxon>
        <taxon>Bacillota</taxon>
        <taxon>Bacilli</taxon>
        <taxon>Bacillales</taxon>
        <taxon>Staphylococcaceae</taxon>
        <taxon>Staphylococcus</taxon>
    </lineage>
</organism>